<keyword id="KW-0175">Coiled coil</keyword>
<keyword id="KW-0238">DNA-binding</keyword>
<keyword id="KW-0804">Transcription</keyword>
<keyword id="KW-0805">Transcription regulation</keyword>
<name>GREA_STAA1</name>
<proteinExistence type="inferred from homology"/>
<feature type="chain" id="PRO_1000034297" description="Transcription elongation factor GreA">
    <location>
        <begin position="1"/>
        <end position="158"/>
    </location>
</feature>
<feature type="coiled-coil region" evidence="1">
    <location>
        <begin position="4"/>
        <end position="70"/>
    </location>
</feature>
<organism>
    <name type="scientific">Staphylococcus aureus (strain Mu3 / ATCC 700698)</name>
    <dbReference type="NCBI Taxonomy" id="418127"/>
    <lineage>
        <taxon>Bacteria</taxon>
        <taxon>Bacillati</taxon>
        <taxon>Bacillota</taxon>
        <taxon>Bacilli</taxon>
        <taxon>Bacillales</taxon>
        <taxon>Staphylococcaceae</taxon>
        <taxon>Staphylococcus</taxon>
    </lineage>
</organism>
<comment type="function">
    <text evidence="1">Necessary for efficient RNA polymerase transcription elongation past template-encoded arresting sites. The arresting sites in DNA have the property of trapping a certain fraction of elongating RNA polymerases that pass through, resulting in locked ternary complexes. Cleavage of the nascent transcript by cleavage factors such as GreA or GreB allows the resumption of elongation from the new 3'terminus. GreA releases sequences of 2 to 3 nucleotides.</text>
</comment>
<comment type="similarity">
    <text evidence="1">Belongs to the GreA/GreB family.</text>
</comment>
<evidence type="ECO:0000255" key="1">
    <source>
        <dbReference type="HAMAP-Rule" id="MF_00105"/>
    </source>
</evidence>
<dbReference type="EMBL" id="AP009324">
    <property type="protein sequence ID" value="BAF78480.1"/>
    <property type="molecule type" value="Genomic_DNA"/>
</dbReference>
<dbReference type="RefSeq" id="WP_000431312.1">
    <property type="nucleotide sequence ID" value="NZ_CTYB01000003.1"/>
</dbReference>
<dbReference type="SMR" id="A7X319"/>
<dbReference type="KEGG" id="saw:SAHV_1597"/>
<dbReference type="HOGENOM" id="CLU_101379_2_1_9"/>
<dbReference type="GO" id="GO:0003677">
    <property type="term" value="F:DNA binding"/>
    <property type="evidence" value="ECO:0007669"/>
    <property type="project" value="UniProtKB-UniRule"/>
</dbReference>
<dbReference type="GO" id="GO:0070063">
    <property type="term" value="F:RNA polymerase binding"/>
    <property type="evidence" value="ECO:0007669"/>
    <property type="project" value="InterPro"/>
</dbReference>
<dbReference type="GO" id="GO:0006354">
    <property type="term" value="P:DNA-templated transcription elongation"/>
    <property type="evidence" value="ECO:0007669"/>
    <property type="project" value="TreeGrafter"/>
</dbReference>
<dbReference type="GO" id="GO:0032784">
    <property type="term" value="P:regulation of DNA-templated transcription elongation"/>
    <property type="evidence" value="ECO:0007669"/>
    <property type="project" value="UniProtKB-UniRule"/>
</dbReference>
<dbReference type="FunFam" id="1.10.287.180:FF:000001">
    <property type="entry name" value="Transcription elongation factor GreA"/>
    <property type="match status" value="1"/>
</dbReference>
<dbReference type="FunFam" id="3.10.50.30:FF:000001">
    <property type="entry name" value="Transcription elongation factor GreA"/>
    <property type="match status" value="1"/>
</dbReference>
<dbReference type="Gene3D" id="3.10.50.30">
    <property type="entry name" value="Transcription elongation factor, GreA/GreB, C-terminal domain"/>
    <property type="match status" value="1"/>
</dbReference>
<dbReference type="Gene3D" id="1.10.287.180">
    <property type="entry name" value="Transcription elongation factor, GreA/GreB, N-terminal domain"/>
    <property type="match status" value="1"/>
</dbReference>
<dbReference type="HAMAP" id="MF_00105">
    <property type="entry name" value="GreA_GreB"/>
    <property type="match status" value="1"/>
</dbReference>
<dbReference type="InterPro" id="IPR036953">
    <property type="entry name" value="GreA/GreB_C_sf"/>
</dbReference>
<dbReference type="InterPro" id="IPR018151">
    <property type="entry name" value="TF_GreA/GreB_CS"/>
</dbReference>
<dbReference type="InterPro" id="IPR006359">
    <property type="entry name" value="Tscrpt_elong_fac_GreA"/>
</dbReference>
<dbReference type="InterPro" id="IPR028624">
    <property type="entry name" value="Tscrpt_elong_fac_GreA/B"/>
</dbReference>
<dbReference type="InterPro" id="IPR001437">
    <property type="entry name" value="Tscrpt_elong_fac_GreA/B_C"/>
</dbReference>
<dbReference type="InterPro" id="IPR023459">
    <property type="entry name" value="Tscrpt_elong_fac_GreA/B_fam"/>
</dbReference>
<dbReference type="InterPro" id="IPR022691">
    <property type="entry name" value="Tscrpt_elong_fac_GreA/B_N"/>
</dbReference>
<dbReference type="InterPro" id="IPR036805">
    <property type="entry name" value="Tscrpt_elong_fac_GreA/B_N_sf"/>
</dbReference>
<dbReference type="NCBIfam" id="TIGR01462">
    <property type="entry name" value="greA"/>
    <property type="match status" value="1"/>
</dbReference>
<dbReference type="NCBIfam" id="NF001261">
    <property type="entry name" value="PRK00226.1-2"/>
    <property type="match status" value="1"/>
</dbReference>
<dbReference type="NCBIfam" id="NF001263">
    <property type="entry name" value="PRK00226.1-4"/>
    <property type="match status" value="1"/>
</dbReference>
<dbReference type="PANTHER" id="PTHR30437">
    <property type="entry name" value="TRANSCRIPTION ELONGATION FACTOR GREA"/>
    <property type="match status" value="1"/>
</dbReference>
<dbReference type="PANTHER" id="PTHR30437:SF4">
    <property type="entry name" value="TRANSCRIPTION ELONGATION FACTOR GREA"/>
    <property type="match status" value="1"/>
</dbReference>
<dbReference type="Pfam" id="PF01272">
    <property type="entry name" value="GreA_GreB"/>
    <property type="match status" value="1"/>
</dbReference>
<dbReference type="Pfam" id="PF03449">
    <property type="entry name" value="GreA_GreB_N"/>
    <property type="match status" value="1"/>
</dbReference>
<dbReference type="PIRSF" id="PIRSF006092">
    <property type="entry name" value="GreA_GreB"/>
    <property type="match status" value="1"/>
</dbReference>
<dbReference type="SUPFAM" id="SSF54534">
    <property type="entry name" value="FKBP-like"/>
    <property type="match status" value="1"/>
</dbReference>
<dbReference type="SUPFAM" id="SSF46557">
    <property type="entry name" value="GreA transcript cleavage protein, N-terminal domain"/>
    <property type="match status" value="1"/>
</dbReference>
<dbReference type="PROSITE" id="PS00829">
    <property type="entry name" value="GREAB_1"/>
    <property type="match status" value="1"/>
</dbReference>
<dbReference type="PROSITE" id="PS00830">
    <property type="entry name" value="GREAB_2"/>
    <property type="match status" value="1"/>
</dbReference>
<reference key="1">
    <citation type="journal article" date="2008" name="Antimicrob. Agents Chemother.">
        <title>Mutated response regulator graR is responsible for phenotypic conversion of Staphylococcus aureus from heterogeneous vancomycin-intermediate resistance to vancomycin-intermediate resistance.</title>
        <authorList>
            <person name="Neoh H.-M."/>
            <person name="Cui L."/>
            <person name="Yuzawa H."/>
            <person name="Takeuchi F."/>
            <person name="Matsuo M."/>
            <person name="Hiramatsu K."/>
        </authorList>
    </citation>
    <scope>NUCLEOTIDE SEQUENCE [LARGE SCALE GENOMIC DNA]</scope>
    <source>
        <strain>Mu3 / ATCC 700698</strain>
    </source>
</reference>
<gene>
    <name evidence="1" type="primary">greA</name>
    <name type="ordered locus">SAHV_1597</name>
</gene>
<accession>A7X319</accession>
<sequence>MENQKQYPMTQEGFEKLERELEELKTVKRPEVVEKIKVARSFGDLSENSEYDAAKDEQGFIEQDIQRIEHMLRNALIIEDTGDNNVVKIGKTVTFVELPGDEEESYQIVGSAESDAFNGKISNESPMAKALIGKGLDDEVRVPLPNGGEMNVKIVNIQ</sequence>
<protein>
    <recommendedName>
        <fullName evidence="1">Transcription elongation factor GreA</fullName>
    </recommendedName>
    <alternativeName>
        <fullName evidence="1">Transcript cleavage factor GreA</fullName>
    </alternativeName>
</protein>